<name>ALR_PECAS</name>
<reference key="1">
    <citation type="journal article" date="2004" name="Proc. Natl. Acad. Sci. U.S.A.">
        <title>Genome sequence of the enterobacterial phytopathogen Erwinia carotovora subsp. atroseptica and characterization of virulence factors.</title>
        <authorList>
            <person name="Bell K.S."/>
            <person name="Sebaihia M."/>
            <person name="Pritchard L."/>
            <person name="Holden M.T.G."/>
            <person name="Hyman L.J."/>
            <person name="Holeva M.C."/>
            <person name="Thomson N.R."/>
            <person name="Bentley S.D."/>
            <person name="Churcher L.J.C."/>
            <person name="Mungall K."/>
            <person name="Atkin R."/>
            <person name="Bason N."/>
            <person name="Brooks K."/>
            <person name="Chillingworth T."/>
            <person name="Clark K."/>
            <person name="Doggett J."/>
            <person name="Fraser A."/>
            <person name="Hance Z."/>
            <person name="Hauser H."/>
            <person name="Jagels K."/>
            <person name="Moule S."/>
            <person name="Norbertczak H."/>
            <person name="Ormond D."/>
            <person name="Price C."/>
            <person name="Quail M.A."/>
            <person name="Sanders M."/>
            <person name="Walker D."/>
            <person name="Whitehead S."/>
            <person name="Salmond G.P.C."/>
            <person name="Birch P.R.J."/>
            <person name="Parkhill J."/>
            <person name="Toth I.K."/>
        </authorList>
    </citation>
    <scope>NUCLEOTIDE SEQUENCE [LARGE SCALE GENOMIC DNA]</scope>
    <source>
        <strain>SCRI 1043 / ATCC BAA-672</strain>
    </source>
</reference>
<comment type="function">
    <text evidence="1">Catalyzes the interconversion of L-alanine and D-alanine. May also act on other amino acids.</text>
</comment>
<comment type="catalytic activity">
    <reaction evidence="1">
        <text>L-alanine = D-alanine</text>
        <dbReference type="Rhea" id="RHEA:20249"/>
        <dbReference type="ChEBI" id="CHEBI:57416"/>
        <dbReference type="ChEBI" id="CHEBI:57972"/>
        <dbReference type="EC" id="5.1.1.1"/>
    </reaction>
</comment>
<comment type="cofactor">
    <cofactor evidence="1">
        <name>pyridoxal 5'-phosphate</name>
        <dbReference type="ChEBI" id="CHEBI:597326"/>
    </cofactor>
</comment>
<comment type="pathway">
    <text evidence="1">Amino-acid biosynthesis; D-alanine biosynthesis; D-alanine from L-alanine: step 1/1.</text>
</comment>
<comment type="similarity">
    <text evidence="1">Belongs to the alanine racemase family.</text>
</comment>
<dbReference type="EC" id="5.1.1.1" evidence="1"/>
<dbReference type="EMBL" id="BX950851">
    <property type="protein sequence ID" value="CAG76563.1"/>
    <property type="molecule type" value="Genomic_DNA"/>
</dbReference>
<dbReference type="RefSeq" id="WP_011095165.1">
    <property type="nucleotide sequence ID" value="NC_004547.2"/>
</dbReference>
<dbReference type="SMR" id="Q3V7N2"/>
<dbReference type="STRING" id="218491.ECA3665"/>
<dbReference type="GeneID" id="57210339"/>
<dbReference type="KEGG" id="eca:ECA3665"/>
<dbReference type="PATRIC" id="fig|218491.5.peg.3718"/>
<dbReference type="eggNOG" id="COG0787">
    <property type="taxonomic scope" value="Bacteria"/>
</dbReference>
<dbReference type="HOGENOM" id="CLU_028393_1_0_6"/>
<dbReference type="OrthoDB" id="9813814at2"/>
<dbReference type="UniPathway" id="UPA00042">
    <property type="reaction ID" value="UER00497"/>
</dbReference>
<dbReference type="Proteomes" id="UP000007966">
    <property type="component" value="Chromosome"/>
</dbReference>
<dbReference type="GO" id="GO:0005829">
    <property type="term" value="C:cytosol"/>
    <property type="evidence" value="ECO:0007669"/>
    <property type="project" value="TreeGrafter"/>
</dbReference>
<dbReference type="GO" id="GO:0008784">
    <property type="term" value="F:alanine racemase activity"/>
    <property type="evidence" value="ECO:0007669"/>
    <property type="project" value="UniProtKB-UniRule"/>
</dbReference>
<dbReference type="GO" id="GO:0030170">
    <property type="term" value="F:pyridoxal phosphate binding"/>
    <property type="evidence" value="ECO:0007669"/>
    <property type="project" value="UniProtKB-UniRule"/>
</dbReference>
<dbReference type="GO" id="GO:0030632">
    <property type="term" value="P:D-alanine biosynthetic process"/>
    <property type="evidence" value="ECO:0007669"/>
    <property type="project" value="UniProtKB-UniRule"/>
</dbReference>
<dbReference type="CDD" id="cd06827">
    <property type="entry name" value="PLPDE_III_AR_proteobact"/>
    <property type="match status" value="1"/>
</dbReference>
<dbReference type="FunFam" id="2.40.37.10:FF:000002">
    <property type="entry name" value="Alanine racemase"/>
    <property type="match status" value="1"/>
</dbReference>
<dbReference type="FunFam" id="3.20.20.10:FF:000002">
    <property type="entry name" value="Alanine racemase"/>
    <property type="match status" value="1"/>
</dbReference>
<dbReference type="Gene3D" id="3.20.20.10">
    <property type="entry name" value="Alanine racemase"/>
    <property type="match status" value="1"/>
</dbReference>
<dbReference type="Gene3D" id="2.40.37.10">
    <property type="entry name" value="Lyase, Ornithine Decarboxylase, Chain A, domain 1"/>
    <property type="match status" value="1"/>
</dbReference>
<dbReference type="HAMAP" id="MF_01201">
    <property type="entry name" value="Ala_racemase"/>
    <property type="match status" value="1"/>
</dbReference>
<dbReference type="InterPro" id="IPR000821">
    <property type="entry name" value="Ala_racemase"/>
</dbReference>
<dbReference type="InterPro" id="IPR009006">
    <property type="entry name" value="Ala_racemase/Decarboxylase_C"/>
</dbReference>
<dbReference type="InterPro" id="IPR011079">
    <property type="entry name" value="Ala_racemase_C"/>
</dbReference>
<dbReference type="InterPro" id="IPR001608">
    <property type="entry name" value="Ala_racemase_N"/>
</dbReference>
<dbReference type="InterPro" id="IPR020622">
    <property type="entry name" value="Ala_racemase_pyridoxalP-BS"/>
</dbReference>
<dbReference type="InterPro" id="IPR029066">
    <property type="entry name" value="PLP-binding_barrel"/>
</dbReference>
<dbReference type="NCBIfam" id="TIGR00492">
    <property type="entry name" value="alr"/>
    <property type="match status" value="1"/>
</dbReference>
<dbReference type="PANTHER" id="PTHR30511">
    <property type="entry name" value="ALANINE RACEMASE"/>
    <property type="match status" value="1"/>
</dbReference>
<dbReference type="PANTHER" id="PTHR30511:SF4">
    <property type="entry name" value="ALANINE RACEMASE, BIOSYNTHETIC"/>
    <property type="match status" value="1"/>
</dbReference>
<dbReference type="Pfam" id="PF00842">
    <property type="entry name" value="Ala_racemase_C"/>
    <property type="match status" value="1"/>
</dbReference>
<dbReference type="Pfam" id="PF01168">
    <property type="entry name" value="Ala_racemase_N"/>
    <property type="match status" value="1"/>
</dbReference>
<dbReference type="PRINTS" id="PR00992">
    <property type="entry name" value="ALARACEMASE"/>
</dbReference>
<dbReference type="SMART" id="SM01005">
    <property type="entry name" value="Ala_racemase_C"/>
    <property type="match status" value="1"/>
</dbReference>
<dbReference type="SUPFAM" id="SSF50621">
    <property type="entry name" value="Alanine racemase C-terminal domain-like"/>
    <property type="match status" value="1"/>
</dbReference>
<dbReference type="SUPFAM" id="SSF51419">
    <property type="entry name" value="PLP-binding barrel"/>
    <property type="match status" value="1"/>
</dbReference>
<dbReference type="PROSITE" id="PS00395">
    <property type="entry name" value="ALANINE_RACEMASE"/>
    <property type="match status" value="1"/>
</dbReference>
<proteinExistence type="inferred from homology"/>
<sequence>MKTATAVINRRALRHNLQRIRQLAPGSQIVAVVKANAYGHGMIESAHTFCDADCYGVARLSEALALRAAGITKPIVLLEGFFSADDLPLLVEHQLETAVHSLEQLAALEQATLPQPIRVWMKLDTGMHRLGVLPEHADAFWQRLTECRNVVQPVNIMSHFCRADEPEAGTTERQLACFDAFTQGKPGAQSIAASGGILLWPQAHRDRVRPGIILYGVSPLDNEDAAHFGFQPAMTFTSHLIAVREHKAGETVGYGGTWTSPRDTRLGVVAVGYGDGYPRCAPAGTPVLINGREVPLSGRVSMDMITVDLGPDAQDKVGDEVILWGPTLSVERIAAHTGASAYELITRLTQRTALEYVDGE</sequence>
<feature type="chain" id="PRO_1000065988" description="Alanine racemase">
    <location>
        <begin position="1"/>
        <end position="360"/>
    </location>
</feature>
<feature type="active site" description="Proton acceptor; specific for D-alanine" evidence="1">
    <location>
        <position position="34"/>
    </location>
</feature>
<feature type="active site" description="Proton acceptor; specific for L-alanine" evidence="1">
    <location>
        <position position="254"/>
    </location>
</feature>
<feature type="binding site" evidence="1">
    <location>
        <position position="129"/>
    </location>
    <ligand>
        <name>substrate</name>
    </ligand>
</feature>
<feature type="binding site" evidence="1">
    <location>
        <position position="302"/>
    </location>
    <ligand>
        <name>substrate</name>
    </ligand>
</feature>
<feature type="modified residue" description="N6-(pyridoxal phosphate)lysine" evidence="1">
    <location>
        <position position="34"/>
    </location>
</feature>
<keyword id="KW-0413">Isomerase</keyword>
<keyword id="KW-0663">Pyridoxal phosphate</keyword>
<keyword id="KW-1185">Reference proteome</keyword>
<protein>
    <recommendedName>
        <fullName evidence="1">Alanine racemase</fullName>
        <ecNumber evidence="1">5.1.1.1</ecNumber>
    </recommendedName>
</protein>
<gene>
    <name type="primary">alr</name>
    <name type="ordered locus">ECA3665</name>
</gene>
<organism>
    <name type="scientific">Pectobacterium atrosepticum (strain SCRI 1043 / ATCC BAA-672)</name>
    <name type="common">Erwinia carotovora subsp. atroseptica</name>
    <dbReference type="NCBI Taxonomy" id="218491"/>
    <lineage>
        <taxon>Bacteria</taxon>
        <taxon>Pseudomonadati</taxon>
        <taxon>Pseudomonadota</taxon>
        <taxon>Gammaproteobacteria</taxon>
        <taxon>Enterobacterales</taxon>
        <taxon>Pectobacteriaceae</taxon>
        <taxon>Pectobacterium</taxon>
    </lineage>
</organism>
<evidence type="ECO:0000255" key="1">
    <source>
        <dbReference type="HAMAP-Rule" id="MF_01201"/>
    </source>
</evidence>
<accession>Q3V7N2</accession>